<protein>
    <recommendedName>
        <fullName evidence="1">Uracil phosphoribosyltransferase</fullName>
        <ecNumber evidence="1">2.4.2.9</ecNumber>
    </recommendedName>
    <alternativeName>
        <fullName evidence="1">UMP pyrophosphorylase</fullName>
    </alternativeName>
    <alternativeName>
        <fullName evidence="1">UPRTase</fullName>
    </alternativeName>
</protein>
<keyword id="KW-0021">Allosteric enzyme</keyword>
<keyword id="KW-0328">Glycosyltransferase</keyword>
<keyword id="KW-0342">GTP-binding</keyword>
<keyword id="KW-0460">Magnesium</keyword>
<keyword id="KW-0547">Nucleotide-binding</keyword>
<keyword id="KW-0808">Transferase</keyword>
<dbReference type="EC" id="2.4.2.9" evidence="1"/>
<dbReference type="EMBL" id="CP000950">
    <property type="protein sequence ID" value="ACA67646.1"/>
    <property type="molecule type" value="Genomic_DNA"/>
</dbReference>
<dbReference type="RefSeq" id="WP_002209776.1">
    <property type="nucleotide sequence ID" value="NZ_CP009792.1"/>
</dbReference>
<dbReference type="SMR" id="B1JSF5"/>
<dbReference type="GeneID" id="96666287"/>
<dbReference type="KEGG" id="ypy:YPK_1352"/>
<dbReference type="PATRIC" id="fig|502800.11.peg.1988"/>
<dbReference type="UniPathway" id="UPA00574">
    <property type="reaction ID" value="UER00636"/>
</dbReference>
<dbReference type="GO" id="GO:0005525">
    <property type="term" value="F:GTP binding"/>
    <property type="evidence" value="ECO:0007669"/>
    <property type="project" value="UniProtKB-KW"/>
</dbReference>
<dbReference type="GO" id="GO:0000287">
    <property type="term" value="F:magnesium ion binding"/>
    <property type="evidence" value="ECO:0007669"/>
    <property type="project" value="UniProtKB-UniRule"/>
</dbReference>
<dbReference type="GO" id="GO:0004845">
    <property type="term" value="F:uracil phosphoribosyltransferase activity"/>
    <property type="evidence" value="ECO:0007669"/>
    <property type="project" value="UniProtKB-UniRule"/>
</dbReference>
<dbReference type="GO" id="GO:0044206">
    <property type="term" value="P:UMP salvage"/>
    <property type="evidence" value="ECO:0007669"/>
    <property type="project" value="UniProtKB-UniRule"/>
</dbReference>
<dbReference type="GO" id="GO:0006223">
    <property type="term" value="P:uracil salvage"/>
    <property type="evidence" value="ECO:0007669"/>
    <property type="project" value="InterPro"/>
</dbReference>
<dbReference type="CDD" id="cd06223">
    <property type="entry name" value="PRTases_typeI"/>
    <property type="match status" value="1"/>
</dbReference>
<dbReference type="FunFam" id="3.40.50.2020:FF:000003">
    <property type="entry name" value="Uracil phosphoribosyltransferase"/>
    <property type="match status" value="1"/>
</dbReference>
<dbReference type="Gene3D" id="3.40.50.2020">
    <property type="match status" value="1"/>
</dbReference>
<dbReference type="HAMAP" id="MF_01218_B">
    <property type="entry name" value="Upp_B"/>
    <property type="match status" value="1"/>
</dbReference>
<dbReference type="InterPro" id="IPR000836">
    <property type="entry name" value="PRibTrfase_dom"/>
</dbReference>
<dbReference type="InterPro" id="IPR029057">
    <property type="entry name" value="PRTase-like"/>
</dbReference>
<dbReference type="InterPro" id="IPR034332">
    <property type="entry name" value="Upp_B"/>
</dbReference>
<dbReference type="InterPro" id="IPR050054">
    <property type="entry name" value="UPRTase/APRTase"/>
</dbReference>
<dbReference type="InterPro" id="IPR005765">
    <property type="entry name" value="Ura_phspho_trans"/>
</dbReference>
<dbReference type="NCBIfam" id="NF001097">
    <property type="entry name" value="PRK00129.1"/>
    <property type="match status" value="1"/>
</dbReference>
<dbReference type="NCBIfam" id="TIGR01091">
    <property type="entry name" value="upp"/>
    <property type="match status" value="1"/>
</dbReference>
<dbReference type="PANTHER" id="PTHR32315">
    <property type="entry name" value="ADENINE PHOSPHORIBOSYLTRANSFERASE"/>
    <property type="match status" value="1"/>
</dbReference>
<dbReference type="PANTHER" id="PTHR32315:SF4">
    <property type="entry name" value="URACIL PHOSPHORIBOSYLTRANSFERASE, CHLOROPLASTIC"/>
    <property type="match status" value="1"/>
</dbReference>
<dbReference type="Pfam" id="PF14681">
    <property type="entry name" value="UPRTase"/>
    <property type="match status" value="1"/>
</dbReference>
<dbReference type="SUPFAM" id="SSF53271">
    <property type="entry name" value="PRTase-like"/>
    <property type="match status" value="1"/>
</dbReference>
<organism>
    <name type="scientific">Yersinia pseudotuberculosis serotype O:3 (strain YPIII)</name>
    <dbReference type="NCBI Taxonomy" id="502800"/>
    <lineage>
        <taxon>Bacteria</taxon>
        <taxon>Pseudomonadati</taxon>
        <taxon>Pseudomonadota</taxon>
        <taxon>Gammaproteobacteria</taxon>
        <taxon>Enterobacterales</taxon>
        <taxon>Yersiniaceae</taxon>
        <taxon>Yersinia</taxon>
    </lineage>
</organism>
<reference key="1">
    <citation type="submission" date="2008-02" db="EMBL/GenBank/DDBJ databases">
        <title>Complete sequence of Yersinia pseudotuberculosis YPIII.</title>
        <authorList>
            <consortium name="US DOE Joint Genome Institute"/>
            <person name="Copeland A."/>
            <person name="Lucas S."/>
            <person name="Lapidus A."/>
            <person name="Glavina del Rio T."/>
            <person name="Dalin E."/>
            <person name="Tice H."/>
            <person name="Bruce D."/>
            <person name="Goodwin L."/>
            <person name="Pitluck S."/>
            <person name="Munk A.C."/>
            <person name="Brettin T."/>
            <person name="Detter J.C."/>
            <person name="Han C."/>
            <person name="Tapia R."/>
            <person name="Schmutz J."/>
            <person name="Larimer F."/>
            <person name="Land M."/>
            <person name="Hauser L."/>
            <person name="Challacombe J.F."/>
            <person name="Green L."/>
            <person name="Lindler L.E."/>
            <person name="Nikolich M.P."/>
            <person name="Richardson P."/>
        </authorList>
    </citation>
    <scope>NUCLEOTIDE SEQUENCE [LARGE SCALE GENOMIC DNA]</scope>
    <source>
        <strain>YPIII</strain>
    </source>
</reference>
<feature type="chain" id="PRO_1000139180" description="Uracil phosphoribosyltransferase">
    <location>
        <begin position="1"/>
        <end position="208"/>
    </location>
</feature>
<feature type="binding site" evidence="1">
    <location>
        <position position="78"/>
    </location>
    <ligand>
        <name>5-phospho-alpha-D-ribose 1-diphosphate</name>
        <dbReference type="ChEBI" id="CHEBI:58017"/>
    </ligand>
</feature>
<feature type="binding site" evidence="1">
    <location>
        <position position="103"/>
    </location>
    <ligand>
        <name>5-phospho-alpha-D-ribose 1-diphosphate</name>
        <dbReference type="ChEBI" id="CHEBI:58017"/>
    </ligand>
</feature>
<feature type="binding site" evidence="1">
    <location>
        <begin position="130"/>
        <end position="138"/>
    </location>
    <ligand>
        <name>5-phospho-alpha-D-ribose 1-diphosphate</name>
        <dbReference type="ChEBI" id="CHEBI:58017"/>
    </ligand>
</feature>
<feature type="binding site" evidence="1">
    <location>
        <position position="193"/>
    </location>
    <ligand>
        <name>uracil</name>
        <dbReference type="ChEBI" id="CHEBI:17568"/>
    </ligand>
</feature>
<feature type="binding site" evidence="1">
    <location>
        <begin position="198"/>
        <end position="200"/>
    </location>
    <ligand>
        <name>uracil</name>
        <dbReference type="ChEBI" id="CHEBI:17568"/>
    </ligand>
</feature>
<feature type="binding site" evidence="1">
    <location>
        <position position="199"/>
    </location>
    <ligand>
        <name>5-phospho-alpha-D-ribose 1-diphosphate</name>
        <dbReference type="ChEBI" id="CHEBI:58017"/>
    </ligand>
</feature>
<sequence>MKIVEVKHPLVKHKLGLMRENDISTKRFRELASEVGSLLTYVATADLETETVTIEGWNGPVEIEQIKGKKITVVPILRAGLGMMEGVLENVPSARISVVGVYRDEETLKPVPYFQKLVSNINERMALVVDPMLATGGSMIATIDLLKKAGCQSIKVLVLVAAPEGIKALEEAHPDVELYTASIDQGLNEHGYIIPGLGDAGDKIFGTK</sequence>
<accession>B1JSF5</accession>
<proteinExistence type="inferred from homology"/>
<evidence type="ECO:0000255" key="1">
    <source>
        <dbReference type="HAMAP-Rule" id="MF_01218"/>
    </source>
</evidence>
<comment type="function">
    <text evidence="1">Catalyzes the conversion of uracil and 5-phospho-alpha-D-ribose 1-diphosphate (PRPP) to UMP and diphosphate.</text>
</comment>
<comment type="catalytic activity">
    <reaction evidence="1">
        <text>UMP + diphosphate = 5-phospho-alpha-D-ribose 1-diphosphate + uracil</text>
        <dbReference type="Rhea" id="RHEA:13017"/>
        <dbReference type="ChEBI" id="CHEBI:17568"/>
        <dbReference type="ChEBI" id="CHEBI:33019"/>
        <dbReference type="ChEBI" id="CHEBI:57865"/>
        <dbReference type="ChEBI" id="CHEBI:58017"/>
        <dbReference type="EC" id="2.4.2.9"/>
    </reaction>
</comment>
<comment type="cofactor">
    <cofactor evidence="1">
        <name>Mg(2+)</name>
        <dbReference type="ChEBI" id="CHEBI:18420"/>
    </cofactor>
    <text evidence="1">Binds 1 Mg(2+) ion per subunit. The magnesium is bound as Mg-PRPP.</text>
</comment>
<comment type="activity regulation">
    <text evidence="1">Allosterically activated by GTP.</text>
</comment>
<comment type="pathway">
    <text evidence="1">Pyrimidine metabolism; UMP biosynthesis via salvage pathway; UMP from uracil: step 1/1.</text>
</comment>
<comment type="similarity">
    <text evidence="1">Belongs to the UPRTase family.</text>
</comment>
<name>UPP_YERPY</name>
<gene>
    <name evidence="1" type="primary">upp</name>
    <name type="ordered locus">YPK_1352</name>
</gene>